<reference key="1">
    <citation type="journal article" date="2005" name="Proc. Natl. Acad. Sci. U.S.A.">
        <title>Whole genome sequence of Staphylococcus saprophyticus reveals the pathogenesis of uncomplicated urinary tract infection.</title>
        <authorList>
            <person name="Kuroda M."/>
            <person name="Yamashita A."/>
            <person name="Hirakawa H."/>
            <person name="Kumano M."/>
            <person name="Morikawa K."/>
            <person name="Higashide M."/>
            <person name="Maruyama A."/>
            <person name="Inose Y."/>
            <person name="Matoba K."/>
            <person name="Toh H."/>
            <person name="Kuhara S."/>
            <person name="Hattori M."/>
            <person name="Ohta T."/>
        </authorList>
    </citation>
    <scope>NUCLEOTIDE SEQUENCE [LARGE SCALE GENOMIC DNA]</scope>
    <source>
        <strain>ATCC 15305 / DSM 20229 / NCIMB 8711 / NCTC 7292 / S-41</strain>
    </source>
</reference>
<accession>Q49YU4</accession>
<evidence type="ECO:0000255" key="1">
    <source>
        <dbReference type="HAMAP-Rule" id="MF_00120"/>
    </source>
</evidence>
<organism>
    <name type="scientific">Staphylococcus saprophyticus subsp. saprophyticus (strain ATCC 15305 / DSM 20229 / NCIMB 8711 / NCTC 7292 / S-41)</name>
    <dbReference type="NCBI Taxonomy" id="342451"/>
    <lineage>
        <taxon>Bacteria</taxon>
        <taxon>Bacillati</taxon>
        <taxon>Bacillota</taxon>
        <taxon>Bacilli</taxon>
        <taxon>Bacillales</taxon>
        <taxon>Staphylococcaceae</taxon>
        <taxon>Staphylococcus</taxon>
    </lineage>
</organism>
<feature type="chain" id="PRO_0000241157" description="Glutamyl-tRNA(Gln) amidotransferase subunit A">
    <location>
        <begin position="1"/>
        <end position="485"/>
    </location>
</feature>
<feature type="active site" description="Charge relay system" evidence="1">
    <location>
        <position position="79"/>
    </location>
</feature>
<feature type="active site" description="Charge relay system" evidence="1">
    <location>
        <position position="154"/>
    </location>
</feature>
<feature type="active site" description="Acyl-ester intermediate" evidence="1">
    <location>
        <position position="178"/>
    </location>
</feature>
<sequence length="485" mass="52886">MTIRYESVENLINLIKNKEITPSKVVSDIYDAIEETDPTIKSFLALDKENAIKKAQELDELQAKDQMEGKLFGIPMGIKDNIITEGVETTCASKMLEGFVPIYESTVMNKLRNEQAVLIGKLNMDEFAMGGSTETSYYKKTVNPFDHTAVPGGSSGGSAAAVAAGLVPFSLGSDTGGSIRQPAAYCGIVGLKPTYGRVSRFGLVAFASSLDQIGPLTRTVKDNALVLEAITGVDENDSTSAPVEDADYTSDIGKDIKGLKIALPSEYLGEGVSDEVKASVKEAVETLRGLGATVEEVSLPNTKYGIPSYYVIASSEASSNLSRFDGIRYGYHSPEANSLEELYKMSRSEGFGEEVKRRIFLGTFALSSGYYDAFYKKSQKVRTLIKDDFNRIFENYDVVVGPTTPTTAFNLGDEIDDPLTMYANDLLTTPVNLAGLPGISVPCGQSNGRPIGLQFIGKPFDEKTLYRVAYQYETKFNFHNEYEKL</sequence>
<protein>
    <recommendedName>
        <fullName evidence="1">Glutamyl-tRNA(Gln) amidotransferase subunit A</fullName>
        <shortName evidence="1">Glu-ADT subunit A</shortName>
        <ecNumber evidence="1">6.3.5.7</ecNumber>
    </recommendedName>
</protein>
<keyword id="KW-0067">ATP-binding</keyword>
<keyword id="KW-0436">Ligase</keyword>
<keyword id="KW-0547">Nucleotide-binding</keyword>
<keyword id="KW-0648">Protein biosynthesis</keyword>
<keyword id="KW-1185">Reference proteome</keyword>
<proteinExistence type="inferred from homology"/>
<name>GATA_STAS1</name>
<gene>
    <name evidence="1" type="primary">gatA</name>
    <name type="ordered locus">SSP0891</name>
</gene>
<comment type="function">
    <text evidence="1">Allows the formation of correctly charged Gln-tRNA(Gln) through the transamidation of misacylated Glu-tRNA(Gln) in organisms which lack glutaminyl-tRNA synthetase. The reaction takes place in the presence of glutamine and ATP through an activated gamma-phospho-Glu-tRNA(Gln).</text>
</comment>
<comment type="catalytic activity">
    <reaction evidence="1">
        <text>L-glutamyl-tRNA(Gln) + L-glutamine + ATP + H2O = L-glutaminyl-tRNA(Gln) + L-glutamate + ADP + phosphate + H(+)</text>
        <dbReference type="Rhea" id="RHEA:17521"/>
        <dbReference type="Rhea" id="RHEA-COMP:9681"/>
        <dbReference type="Rhea" id="RHEA-COMP:9684"/>
        <dbReference type="ChEBI" id="CHEBI:15377"/>
        <dbReference type="ChEBI" id="CHEBI:15378"/>
        <dbReference type="ChEBI" id="CHEBI:29985"/>
        <dbReference type="ChEBI" id="CHEBI:30616"/>
        <dbReference type="ChEBI" id="CHEBI:43474"/>
        <dbReference type="ChEBI" id="CHEBI:58359"/>
        <dbReference type="ChEBI" id="CHEBI:78520"/>
        <dbReference type="ChEBI" id="CHEBI:78521"/>
        <dbReference type="ChEBI" id="CHEBI:456216"/>
        <dbReference type="EC" id="6.3.5.7"/>
    </reaction>
</comment>
<comment type="subunit">
    <text evidence="1">Heterotrimer of A, B and C subunits.</text>
</comment>
<comment type="similarity">
    <text evidence="1">Belongs to the amidase family. GatA subfamily.</text>
</comment>
<dbReference type="EC" id="6.3.5.7" evidence="1"/>
<dbReference type="EMBL" id="AP008934">
    <property type="protein sequence ID" value="BAE18036.1"/>
    <property type="molecule type" value="Genomic_DNA"/>
</dbReference>
<dbReference type="RefSeq" id="WP_002482829.1">
    <property type="nucleotide sequence ID" value="NZ_MTGA01000031.1"/>
</dbReference>
<dbReference type="SMR" id="Q49YU4"/>
<dbReference type="GeneID" id="66867049"/>
<dbReference type="KEGG" id="ssp:SSP0891"/>
<dbReference type="eggNOG" id="COG0154">
    <property type="taxonomic scope" value="Bacteria"/>
</dbReference>
<dbReference type="HOGENOM" id="CLU_009600_0_3_9"/>
<dbReference type="OrthoDB" id="9811471at2"/>
<dbReference type="Proteomes" id="UP000006371">
    <property type="component" value="Chromosome"/>
</dbReference>
<dbReference type="GO" id="GO:0030956">
    <property type="term" value="C:glutamyl-tRNA(Gln) amidotransferase complex"/>
    <property type="evidence" value="ECO:0007669"/>
    <property type="project" value="InterPro"/>
</dbReference>
<dbReference type="GO" id="GO:0005524">
    <property type="term" value="F:ATP binding"/>
    <property type="evidence" value="ECO:0007669"/>
    <property type="project" value="UniProtKB-KW"/>
</dbReference>
<dbReference type="GO" id="GO:0050567">
    <property type="term" value="F:glutaminyl-tRNA synthase (glutamine-hydrolyzing) activity"/>
    <property type="evidence" value="ECO:0007669"/>
    <property type="project" value="UniProtKB-UniRule"/>
</dbReference>
<dbReference type="GO" id="GO:0006412">
    <property type="term" value="P:translation"/>
    <property type="evidence" value="ECO:0007669"/>
    <property type="project" value="UniProtKB-UniRule"/>
</dbReference>
<dbReference type="Gene3D" id="3.90.1300.10">
    <property type="entry name" value="Amidase signature (AS) domain"/>
    <property type="match status" value="1"/>
</dbReference>
<dbReference type="HAMAP" id="MF_00120">
    <property type="entry name" value="GatA"/>
    <property type="match status" value="1"/>
</dbReference>
<dbReference type="InterPro" id="IPR000120">
    <property type="entry name" value="Amidase"/>
</dbReference>
<dbReference type="InterPro" id="IPR020556">
    <property type="entry name" value="Amidase_CS"/>
</dbReference>
<dbReference type="InterPro" id="IPR023631">
    <property type="entry name" value="Amidase_dom"/>
</dbReference>
<dbReference type="InterPro" id="IPR036928">
    <property type="entry name" value="AS_sf"/>
</dbReference>
<dbReference type="InterPro" id="IPR004412">
    <property type="entry name" value="GatA"/>
</dbReference>
<dbReference type="NCBIfam" id="TIGR00132">
    <property type="entry name" value="gatA"/>
    <property type="match status" value="1"/>
</dbReference>
<dbReference type="PANTHER" id="PTHR11895:SF151">
    <property type="entry name" value="GLUTAMYL-TRNA(GLN) AMIDOTRANSFERASE SUBUNIT A"/>
    <property type="match status" value="1"/>
</dbReference>
<dbReference type="PANTHER" id="PTHR11895">
    <property type="entry name" value="TRANSAMIDASE"/>
    <property type="match status" value="1"/>
</dbReference>
<dbReference type="Pfam" id="PF01425">
    <property type="entry name" value="Amidase"/>
    <property type="match status" value="1"/>
</dbReference>
<dbReference type="SUPFAM" id="SSF75304">
    <property type="entry name" value="Amidase signature (AS) enzymes"/>
    <property type="match status" value="1"/>
</dbReference>
<dbReference type="PROSITE" id="PS00571">
    <property type="entry name" value="AMIDASES"/>
    <property type="match status" value="1"/>
</dbReference>